<sequence>MKIKKTAGRQPAPNRINEEITGVPEVRLTGIDGEAIGVVSIRDAQNLADEAGVDLVEISPNAEPPVCRIMDYGKFLFDKAKSAKEQKKKQKQVQVKEIKFRPGTDENDYQVKLRNLIRFLEDGDKAKITLRFRGREMAHQNLGMDLLNRIKADLDEYAVVESFPKMEGRQAIMVLAPKKK</sequence>
<comment type="function">
    <text evidence="1">IF-3 binds to the 30S ribosomal subunit and shifts the equilibrium between 70S ribosomes and their 50S and 30S subunits in favor of the free subunits, thus enhancing the availability of 30S subunits on which protein synthesis initiation begins.</text>
</comment>
<comment type="subunit">
    <text evidence="1">Monomer.</text>
</comment>
<comment type="subcellular location">
    <subcellularLocation>
        <location evidence="1">Cytoplasm</location>
    </subcellularLocation>
</comment>
<comment type="similarity">
    <text evidence="1">Belongs to the IF-3 family.</text>
</comment>
<feature type="chain" id="PRO_1000117104" description="Translation initiation factor IF-3">
    <location>
        <begin position="1"/>
        <end position="180"/>
    </location>
</feature>
<accession>A6WNH1</accession>
<evidence type="ECO:0000255" key="1">
    <source>
        <dbReference type="HAMAP-Rule" id="MF_00080"/>
    </source>
</evidence>
<protein>
    <recommendedName>
        <fullName evidence="1">Translation initiation factor IF-3</fullName>
    </recommendedName>
</protein>
<dbReference type="EMBL" id="CP000753">
    <property type="protein sequence ID" value="ABS08360.1"/>
    <property type="molecule type" value="Genomic_DNA"/>
</dbReference>
<dbReference type="RefSeq" id="WP_012089240.1">
    <property type="nucleotide sequence ID" value="NC_009665.1"/>
</dbReference>
<dbReference type="SMR" id="A6WNH1"/>
<dbReference type="GeneID" id="11772456"/>
<dbReference type="KEGG" id="sbm:Shew185_2221"/>
<dbReference type="HOGENOM" id="CLU_054919_3_2_6"/>
<dbReference type="GO" id="GO:0005829">
    <property type="term" value="C:cytosol"/>
    <property type="evidence" value="ECO:0007669"/>
    <property type="project" value="TreeGrafter"/>
</dbReference>
<dbReference type="GO" id="GO:0016020">
    <property type="term" value="C:membrane"/>
    <property type="evidence" value="ECO:0007669"/>
    <property type="project" value="TreeGrafter"/>
</dbReference>
<dbReference type="GO" id="GO:0043022">
    <property type="term" value="F:ribosome binding"/>
    <property type="evidence" value="ECO:0007669"/>
    <property type="project" value="TreeGrafter"/>
</dbReference>
<dbReference type="GO" id="GO:0003743">
    <property type="term" value="F:translation initiation factor activity"/>
    <property type="evidence" value="ECO:0007669"/>
    <property type="project" value="UniProtKB-UniRule"/>
</dbReference>
<dbReference type="GO" id="GO:0032790">
    <property type="term" value="P:ribosome disassembly"/>
    <property type="evidence" value="ECO:0007669"/>
    <property type="project" value="TreeGrafter"/>
</dbReference>
<dbReference type="FunFam" id="3.10.20.80:FF:000001">
    <property type="entry name" value="Translation initiation factor IF-3"/>
    <property type="match status" value="1"/>
</dbReference>
<dbReference type="FunFam" id="3.30.110.10:FF:000001">
    <property type="entry name" value="Translation initiation factor IF-3"/>
    <property type="match status" value="1"/>
</dbReference>
<dbReference type="Gene3D" id="3.30.110.10">
    <property type="entry name" value="Translation initiation factor 3 (IF-3), C-terminal domain"/>
    <property type="match status" value="1"/>
</dbReference>
<dbReference type="Gene3D" id="3.10.20.80">
    <property type="entry name" value="Translation initiation factor 3 (IF-3), N-terminal domain"/>
    <property type="match status" value="1"/>
</dbReference>
<dbReference type="HAMAP" id="MF_00080">
    <property type="entry name" value="IF_3"/>
    <property type="match status" value="1"/>
</dbReference>
<dbReference type="InterPro" id="IPR036788">
    <property type="entry name" value="T_IF-3_C_sf"/>
</dbReference>
<dbReference type="InterPro" id="IPR036787">
    <property type="entry name" value="T_IF-3_N_sf"/>
</dbReference>
<dbReference type="InterPro" id="IPR019813">
    <property type="entry name" value="Translation_initiation_fac3_CS"/>
</dbReference>
<dbReference type="InterPro" id="IPR001288">
    <property type="entry name" value="Translation_initiation_fac_3"/>
</dbReference>
<dbReference type="InterPro" id="IPR019815">
    <property type="entry name" value="Translation_initiation_fac_3_C"/>
</dbReference>
<dbReference type="InterPro" id="IPR019814">
    <property type="entry name" value="Translation_initiation_fac_3_N"/>
</dbReference>
<dbReference type="NCBIfam" id="TIGR00168">
    <property type="entry name" value="infC"/>
    <property type="match status" value="1"/>
</dbReference>
<dbReference type="PANTHER" id="PTHR10938">
    <property type="entry name" value="TRANSLATION INITIATION FACTOR IF-3"/>
    <property type="match status" value="1"/>
</dbReference>
<dbReference type="PANTHER" id="PTHR10938:SF0">
    <property type="entry name" value="TRANSLATION INITIATION FACTOR IF-3, MITOCHONDRIAL"/>
    <property type="match status" value="1"/>
</dbReference>
<dbReference type="Pfam" id="PF00707">
    <property type="entry name" value="IF3_C"/>
    <property type="match status" value="1"/>
</dbReference>
<dbReference type="Pfam" id="PF05198">
    <property type="entry name" value="IF3_N"/>
    <property type="match status" value="1"/>
</dbReference>
<dbReference type="SUPFAM" id="SSF55200">
    <property type="entry name" value="Translation initiation factor IF3, C-terminal domain"/>
    <property type="match status" value="1"/>
</dbReference>
<dbReference type="SUPFAM" id="SSF54364">
    <property type="entry name" value="Translation initiation factor IF3, N-terminal domain"/>
    <property type="match status" value="1"/>
</dbReference>
<dbReference type="PROSITE" id="PS00938">
    <property type="entry name" value="IF3"/>
    <property type="match status" value="1"/>
</dbReference>
<organism>
    <name type="scientific">Shewanella baltica (strain OS185)</name>
    <dbReference type="NCBI Taxonomy" id="402882"/>
    <lineage>
        <taxon>Bacteria</taxon>
        <taxon>Pseudomonadati</taxon>
        <taxon>Pseudomonadota</taxon>
        <taxon>Gammaproteobacteria</taxon>
        <taxon>Alteromonadales</taxon>
        <taxon>Shewanellaceae</taxon>
        <taxon>Shewanella</taxon>
    </lineage>
</organism>
<reference key="1">
    <citation type="submission" date="2007-07" db="EMBL/GenBank/DDBJ databases">
        <title>Complete sequence of chromosome of Shewanella baltica OS185.</title>
        <authorList>
            <consortium name="US DOE Joint Genome Institute"/>
            <person name="Copeland A."/>
            <person name="Lucas S."/>
            <person name="Lapidus A."/>
            <person name="Barry K."/>
            <person name="Glavina del Rio T."/>
            <person name="Dalin E."/>
            <person name="Tice H."/>
            <person name="Pitluck S."/>
            <person name="Sims D."/>
            <person name="Brettin T."/>
            <person name="Bruce D."/>
            <person name="Detter J.C."/>
            <person name="Han C."/>
            <person name="Schmutz J."/>
            <person name="Larimer F."/>
            <person name="Land M."/>
            <person name="Hauser L."/>
            <person name="Kyrpides N."/>
            <person name="Mikhailova N."/>
            <person name="Brettar I."/>
            <person name="Rodrigues J."/>
            <person name="Konstantinidis K."/>
            <person name="Tiedje J."/>
            <person name="Richardson P."/>
        </authorList>
    </citation>
    <scope>NUCLEOTIDE SEQUENCE [LARGE SCALE GENOMIC DNA]</scope>
    <source>
        <strain>OS185</strain>
    </source>
</reference>
<name>IF3_SHEB8</name>
<gene>
    <name evidence="1" type="primary">infC</name>
    <name type="ordered locus">Shew185_2221</name>
</gene>
<proteinExistence type="inferred from homology"/>
<keyword id="KW-0963">Cytoplasm</keyword>
<keyword id="KW-0396">Initiation factor</keyword>
<keyword id="KW-0648">Protein biosynthesis</keyword>